<accession>Q9LQL2</accession>
<evidence type="ECO:0000250" key="1">
    <source>
        <dbReference type="UniProtKB" id="Q05085"/>
    </source>
</evidence>
<evidence type="ECO:0000255" key="2"/>
<evidence type="ECO:0000256" key="3">
    <source>
        <dbReference type="SAM" id="MobiDB-lite"/>
    </source>
</evidence>
<evidence type="ECO:0000269" key="4">
    <source>
    </source>
</evidence>
<evidence type="ECO:0000269" key="5">
    <source>
    </source>
</evidence>
<evidence type="ECO:0000269" key="6">
    <source>
    </source>
</evidence>
<evidence type="ECO:0000305" key="7"/>
<protein>
    <recommendedName>
        <fullName>Protein NRT1/ PTR FAMILY 7.3</fullName>
        <shortName>AtNPF7.3</shortName>
    </recommendedName>
    <alternativeName>
        <fullName>Nitrate transporter 1.5</fullName>
    </alternativeName>
</protein>
<dbReference type="EMBL" id="AC007767">
    <property type="protein sequence ID" value="AAF81343.1"/>
    <property type="status" value="ALT_SEQ"/>
    <property type="molecule type" value="Genomic_DNA"/>
</dbReference>
<dbReference type="EMBL" id="CP002684">
    <property type="protein sequence ID" value="AEE31488.1"/>
    <property type="molecule type" value="Genomic_DNA"/>
</dbReference>
<dbReference type="EMBL" id="BX841204">
    <property type="status" value="NOT_ANNOTATED_CDS"/>
    <property type="molecule type" value="mRNA"/>
</dbReference>
<dbReference type="PIR" id="G86449">
    <property type="entry name" value="G86449"/>
</dbReference>
<dbReference type="RefSeq" id="NP_174523.2">
    <property type="nucleotide sequence ID" value="NM_102980.4"/>
</dbReference>
<dbReference type="SMR" id="Q9LQL2"/>
<dbReference type="BioGRID" id="25373">
    <property type="interactions" value="1"/>
</dbReference>
<dbReference type="FunCoup" id="Q9LQL2">
    <property type="interactions" value="1968"/>
</dbReference>
<dbReference type="IntAct" id="Q9LQL2">
    <property type="interactions" value="1"/>
</dbReference>
<dbReference type="STRING" id="3702.Q9LQL2"/>
<dbReference type="TCDB" id="2.A.17.3.19">
    <property type="family name" value="the proton-dependent oligopeptide transporter (pot/ptr) family"/>
</dbReference>
<dbReference type="PaxDb" id="3702-AT1G32450.1"/>
<dbReference type="ProteomicsDB" id="224834"/>
<dbReference type="EnsemblPlants" id="AT1G32450.1">
    <property type="protein sequence ID" value="AT1G32450.1"/>
    <property type="gene ID" value="AT1G32450"/>
</dbReference>
<dbReference type="GeneID" id="840139"/>
<dbReference type="Gramene" id="AT1G32450.1">
    <property type="protein sequence ID" value="AT1G32450.1"/>
    <property type="gene ID" value="AT1G32450"/>
</dbReference>
<dbReference type="KEGG" id="ath:AT1G32450"/>
<dbReference type="Araport" id="AT1G32450"/>
<dbReference type="TAIR" id="AT1G32450">
    <property type="gene designation" value="NPF7.3"/>
</dbReference>
<dbReference type="eggNOG" id="KOG1237">
    <property type="taxonomic scope" value="Eukaryota"/>
</dbReference>
<dbReference type="HOGENOM" id="CLU_009313_4_1_1"/>
<dbReference type="InParanoid" id="Q9LQL2"/>
<dbReference type="OMA" id="EMQDMSD"/>
<dbReference type="OrthoDB" id="8904098at2759"/>
<dbReference type="PhylomeDB" id="Q9LQL2"/>
<dbReference type="PRO" id="PR:Q9LQL2"/>
<dbReference type="Proteomes" id="UP000006548">
    <property type="component" value="Chromosome 1"/>
</dbReference>
<dbReference type="ExpressionAtlas" id="Q9LQL2">
    <property type="expression patterns" value="baseline and differential"/>
</dbReference>
<dbReference type="GO" id="GO:0005886">
    <property type="term" value="C:plasma membrane"/>
    <property type="evidence" value="ECO:0000314"/>
    <property type="project" value="TAIR"/>
</dbReference>
<dbReference type="GO" id="GO:0015112">
    <property type="term" value="F:nitrate transmembrane transporter activity"/>
    <property type="evidence" value="ECO:0000314"/>
    <property type="project" value="TAIR"/>
</dbReference>
<dbReference type="GO" id="GO:0015386">
    <property type="term" value="F:potassium:proton antiporter activity"/>
    <property type="evidence" value="ECO:0000314"/>
    <property type="project" value="TAIR"/>
</dbReference>
<dbReference type="GO" id="GO:0015293">
    <property type="term" value="F:symporter activity"/>
    <property type="evidence" value="ECO:0007669"/>
    <property type="project" value="UniProtKB-KW"/>
</dbReference>
<dbReference type="GO" id="GO:0010150">
    <property type="term" value="P:leaf senescence"/>
    <property type="evidence" value="ECO:0000315"/>
    <property type="project" value="TAIR"/>
</dbReference>
<dbReference type="GO" id="GO:0015706">
    <property type="term" value="P:nitrate transmembrane transport"/>
    <property type="evidence" value="ECO:0000315"/>
    <property type="project" value="TAIR"/>
</dbReference>
<dbReference type="GO" id="GO:0055075">
    <property type="term" value="P:potassium ion homeostasis"/>
    <property type="evidence" value="ECO:0000314"/>
    <property type="project" value="TAIR"/>
</dbReference>
<dbReference type="GO" id="GO:1902600">
    <property type="term" value="P:proton transmembrane transport"/>
    <property type="evidence" value="ECO:0000314"/>
    <property type="project" value="TAIR"/>
</dbReference>
<dbReference type="GO" id="GO:0010167">
    <property type="term" value="P:response to nitrate"/>
    <property type="evidence" value="ECO:0000270"/>
    <property type="project" value="TAIR"/>
</dbReference>
<dbReference type="CDD" id="cd17419">
    <property type="entry name" value="MFS_NPF7"/>
    <property type="match status" value="1"/>
</dbReference>
<dbReference type="Gene3D" id="1.20.1250.20">
    <property type="entry name" value="MFS general substrate transporter like domains"/>
    <property type="match status" value="1"/>
</dbReference>
<dbReference type="InterPro" id="IPR036259">
    <property type="entry name" value="MFS_trans_sf"/>
</dbReference>
<dbReference type="InterPro" id="IPR000109">
    <property type="entry name" value="POT_fam"/>
</dbReference>
<dbReference type="PANTHER" id="PTHR11654">
    <property type="entry name" value="OLIGOPEPTIDE TRANSPORTER-RELATED"/>
    <property type="match status" value="1"/>
</dbReference>
<dbReference type="Pfam" id="PF00854">
    <property type="entry name" value="PTR2"/>
    <property type="match status" value="1"/>
</dbReference>
<dbReference type="SUPFAM" id="SSF103473">
    <property type="entry name" value="MFS general substrate transporter"/>
    <property type="match status" value="1"/>
</dbReference>
<keyword id="KW-1003">Cell membrane</keyword>
<keyword id="KW-0472">Membrane</keyword>
<keyword id="KW-0534">Nitrate assimilation</keyword>
<keyword id="KW-0597">Phosphoprotein</keyword>
<keyword id="KW-1185">Reference proteome</keyword>
<keyword id="KW-0769">Symport</keyword>
<keyword id="KW-0812">Transmembrane</keyword>
<keyword id="KW-1133">Transmembrane helix</keyword>
<keyword id="KW-0813">Transport</keyword>
<reference key="1">
    <citation type="journal article" date="2000" name="Nature">
        <title>Sequence and analysis of chromosome 1 of the plant Arabidopsis thaliana.</title>
        <authorList>
            <person name="Theologis A."/>
            <person name="Ecker J.R."/>
            <person name="Palm C.J."/>
            <person name="Federspiel N.A."/>
            <person name="Kaul S."/>
            <person name="White O."/>
            <person name="Alonso J."/>
            <person name="Altafi H."/>
            <person name="Araujo R."/>
            <person name="Bowman C.L."/>
            <person name="Brooks S.Y."/>
            <person name="Buehler E."/>
            <person name="Chan A."/>
            <person name="Chao Q."/>
            <person name="Chen H."/>
            <person name="Cheuk R.F."/>
            <person name="Chin C.W."/>
            <person name="Chung M.K."/>
            <person name="Conn L."/>
            <person name="Conway A.B."/>
            <person name="Conway A.R."/>
            <person name="Creasy T.H."/>
            <person name="Dewar K."/>
            <person name="Dunn P."/>
            <person name="Etgu P."/>
            <person name="Feldblyum T.V."/>
            <person name="Feng J.-D."/>
            <person name="Fong B."/>
            <person name="Fujii C.Y."/>
            <person name="Gill J.E."/>
            <person name="Goldsmith A.D."/>
            <person name="Haas B."/>
            <person name="Hansen N.F."/>
            <person name="Hughes B."/>
            <person name="Huizar L."/>
            <person name="Hunter J.L."/>
            <person name="Jenkins J."/>
            <person name="Johnson-Hopson C."/>
            <person name="Khan S."/>
            <person name="Khaykin E."/>
            <person name="Kim C.J."/>
            <person name="Koo H.L."/>
            <person name="Kremenetskaia I."/>
            <person name="Kurtz D.B."/>
            <person name="Kwan A."/>
            <person name="Lam B."/>
            <person name="Langin-Hooper S."/>
            <person name="Lee A."/>
            <person name="Lee J.M."/>
            <person name="Lenz C.A."/>
            <person name="Li J.H."/>
            <person name="Li Y.-P."/>
            <person name="Lin X."/>
            <person name="Liu S.X."/>
            <person name="Liu Z.A."/>
            <person name="Luros J.S."/>
            <person name="Maiti R."/>
            <person name="Marziali A."/>
            <person name="Militscher J."/>
            <person name="Miranda M."/>
            <person name="Nguyen M."/>
            <person name="Nierman W.C."/>
            <person name="Osborne B.I."/>
            <person name="Pai G."/>
            <person name="Peterson J."/>
            <person name="Pham P.K."/>
            <person name="Rizzo M."/>
            <person name="Rooney T."/>
            <person name="Rowley D."/>
            <person name="Sakano H."/>
            <person name="Salzberg S.L."/>
            <person name="Schwartz J.R."/>
            <person name="Shinn P."/>
            <person name="Southwick A.M."/>
            <person name="Sun H."/>
            <person name="Tallon L.J."/>
            <person name="Tambunga G."/>
            <person name="Toriumi M.J."/>
            <person name="Town C.D."/>
            <person name="Utterback T."/>
            <person name="Van Aken S."/>
            <person name="Vaysberg M."/>
            <person name="Vysotskaia V.S."/>
            <person name="Walker M."/>
            <person name="Wu D."/>
            <person name="Yu G."/>
            <person name="Fraser C.M."/>
            <person name="Venter J.C."/>
            <person name="Davis R.W."/>
        </authorList>
    </citation>
    <scope>NUCLEOTIDE SEQUENCE [LARGE SCALE GENOMIC DNA]</scope>
    <source>
        <strain>cv. Columbia</strain>
    </source>
</reference>
<reference key="2">
    <citation type="journal article" date="2017" name="Plant J.">
        <title>Araport11: a complete reannotation of the Arabidopsis thaliana reference genome.</title>
        <authorList>
            <person name="Cheng C.Y."/>
            <person name="Krishnakumar V."/>
            <person name="Chan A.P."/>
            <person name="Thibaud-Nissen F."/>
            <person name="Schobel S."/>
            <person name="Town C.D."/>
        </authorList>
    </citation>
    <scope>GENOME REANNOTATION</scope>
    <source>
        <strain>cv. Columbia</strain>
    </source>
</reference>
<reference key="3">
    <citation type="journal article" date="2004" name="Genome Res.">
        <title>Whole genome sequence comparisons and 'full-length' cDNA sequences: a combined approach to evaluate and improve Arabidopsis genome annotation.</title>
        <authorList>
            <person name="Castelli V."/>
            <person name="Aury J.-M."/>
            <person name="Jaillon O."/>
            <person name="Wincker P."/>
            <person name="Clepet C."/>
            <person name="Menard M."/>
            <person name="Cruaud C."/>
            <person name="Quetier F."/>
            <person name="Scarpelli C."/>
            <person name="Schaechter V."/>
            <person name="Temple G."/>
            <person name="Caboche M."/>
            <person name="Weissenbach J."/>
            <person name="Salanoubat M."/>
        </authorList>
    </citation>
    <scope>NUCLEOTIDE SEQUENCE [LARGE SCALE MRNA] OF 1-298</scope>
    <source>
        <strain>cv. Columbia</strain>
    </source>
</reference>
<reference key="4">
    <citation type="journal article" date="2007" name="FEBS Lett.">
        <title>Nitrate transporters and peptide transporters.</title>
        <authorList>
            <person name="Tsay Y.F."/>
            <person name="Chiu C.C."/>
            <person name="Tsai C.B."/>
            <person name="Ho C.H."/>
            <person name="Hsu P.K."/>
        </authorList>
    </citation>
    <scope>TISSUE SPECIFICITY</scope>
    <scope>GENE FAMILY</scope>
</reference>
<reference key="5">
    <citation type="journal article" date="2008" name="Plant Cell">
        <title>Mutation of the Arabidopsis NRT1.5 nitrate transporter causes defective root-to-shoot nitrate transport.</title>
        <authorList>
            <person name="Lin S.H."/>
            <person name="Kuo H.F."/>
            <person name="Canivenc G."/>
            <person name="Lin C.S."/>
            <person name="Lepetit M."/>
            <person name="Hsu P.K."/>
            <person name="Tillard P."/>
            <person name="Lin H.L."/>
            <person name="Wang Y.Y."/>
            <person name="Tsai C.B."/>
            <person name="Gojon A."/>
            <person name="Tsay Y.F."/>
        </authorList>
    </citation>
    <scope>FUNCTION</scope>
    <scope>TISSUE SPECIFICITY</scope>
    <scope>INDUCTION</scope>
    <scope>SUBCELLULAR LOCATION</scope>
    <scope>DISRUPTION PHENOTYPE</scope>
    <scope>BIOPHYSICOCHEMICAL PROPERTIES</scope>
</reference>
<reference key="6">
    <citation type="journal article" date="2010" name="Plant Cell">
        <title>The Arabidopsis nitrate transporter NRT1.8 functions in nitrate removal from the xylem sap and mediates cadmium tolerance.</title>
        <authorList>
            <person name="Li J.Y."/>
            <person name="Fu Y.L."/>
            <person name="Pike S.M."/>
            <person name="Bao J."/>
            <person name="Tian W."/>
            <person name="Zhang Y."/>
            <person name="Chen C.Z."/>
            <person name="Zhang Y."/>
            <person name="Li H.M."/>
            <person name="Huang J."/>
            <person name="Li L.G."/>
            <person name="Schroeder J.I."/>
            <person name="Gassmann W."/>
            <person name="Gong J.M."/>
        </authorList>
    </citation>
    <scope>TISSUE SPECIFICITY</scope>
    <scope>INDUCTION BY CADMIUM</scope>
    <scope>DISRUPTION PHENOTYPE</scope>
    <scope>GENE FAMILY</scope>
</reference>
<reference key="7">
    <citation type="journal article" date="2014" name="Trends Plant Sci.">
        <title>A unified nomenclature of NITRATE TRANSPORTER 1/PEPTIDE TRANSPORTER family members in plants.</title>
        <authorList>
            <person name="Leran S."/>
            <person name="Varala K."/>
            <person name="Boyer J.C."/>
            <person name="Chiurazzi M."/>
            <person name="Crawford N."/>
            <person name="Daniel-Vedele F."/>
            <person name="David L."/>
            <person name="Dickstein R."/>
            <person name="Fernandez E."/>
            <person name="Forde B."/>
            <person name="Gassmann W."/>
            <person name="Geiger D."/>
            <person name="Gojon A."/>
            <person name="Gong J.M."/>
            <person name="Halkier B.A."/>
            <person name="Harris J.M."/>
            <person name="Hedrich R."/>
            <person name="Limami A.M."/>
            <person name="Rentsch D."/>
            <person name="Seo M."/>
            <person name="Tsay Y.F."/>
            <person name="Zhang M."/>
            <person name="Coruzzi G."/>
            <person name="Lacombe B."/>
        </authorList>
    </citation>
    <scope>GENE FAMILY</scope>
    <scope>NOMENCLATURE</scope>
</reference>
<proteinExistence type="evidence at protein level"/>
<sequence length="614" mass="68699">MSCLEIYNKDTMKKKEGEEETRDGTVDYYGRPSIRSNSGQWVAGIVILLNQGLATLAFFGVGVNLVLFLTRVLQQNNADAANNVSKWTGTVYIFSLVGAFLSDSYWGRYKTCAIFQVIFVIGLSSLSLSSYMFLIRPRGCGDEVTPCGSHSMMEITMFYFSIYLIALGYGGYQPNIATLGADQFDEEHPKEGYSKIAFFSYFYLALNLGSLFSNTILGYFEDEGMWALGFWASTGSAIIGLILFLVGTPRYRYFKPTGNPLSRFCQVLVAATKKSSVEAPLRGREEMYDGDSEGKNASVNTGRRIVHTDEFKFLDKAAYITARDLDDKKQDSVNPWRLCPVTQVEEVKCILRLMPIWLCTIIYSVVFTQMASLFVEQGAAMNTSVSDFKIPPASMSSFDILSVALFIFLYRRVLEPVANRFKKNGSKGITELHRMGIGLVIAVIAMIAAGIVECYRLKYADKSCTHCDGSSSLSIFWQAPQYSLIGASEVFMYVGQLEFFNAQTPDGLKSFGSALCMMSMSMGNFVSSLLVTMVVKISTEDHMPGWIPRNLNKGHLDRFYFLLAALTSIDLVVYIACAKWYKPIQLEGKDEMQDMSDDDYDTESEEEREKDSKV</sequence>
<name>PTR14_ARATH</name>
<gene>
    <name type="primary">NPF7.3</name>
    <name type="synonym">NRT1.5</name>
    <name type="ordered locus">At1g32450</name>
    <name type="ORF">F5D14.23</name>
</gene>
<feature type="chain" id="PRO_0000399948" description="Protein NRT1/ PTR FAMILY 7.3">
    <location>
        <begin position="1"/>
        <end position="614"/>
    </location>
</feature>
<feature type="transmembrane region" description="Helical" evidence="2">
    <location>
        <begin position="41"/>
        <end position="61"/>
    </location>
</feature>
<feature type="transmembrane region" description="Helical" evidence="2">
    <location>
        <begin position="87"/>
        <end position="107"/>
    </location>
</feature>
<feature type="transmembrane region" description="Helical" evidence="2">
    <location>
        <begin position="114"/>
        <end position="134"/>
    </location>
</feature>
<feature type="transmembrane region" description="Helical" evidence="2">
    <location>
        <begin position="152"/>
        <end position="172"/>
    </location>
</feature>
<feature type="transmembrane region" description="Helical" evidence="2">
    <location>
        <begin position="196"/>
        <end position="216"/>
    </location>
</feature>
<feature type="transmembrane region" description="Helical" evidence="2">
    <location>
        <begin position="226"/>
        <end position="246"/>
    </location>
</feature>
<feature type="transmembrane region" description="Helical" evidence="2">
    <location>
        <begin position="355"/>
        <end position="375"/>
    </location>
</feature>
<feature type="transmembrane region" description="Helical" evidence="2">
    <location>
        <begin position="390"/>
        <end position="410"/>
    </location>
</feature>
<feature type="transmembrane region" description="Helical" evidence="2">
    <location>
        <begin position="435"/>
        <end position="455"/>
    </location>
</feature>
<feature type="transmembrane region" description="Helical" evidence="2">
    <location>
        <begin position="515"/>
        <end position="535"/>
    </location>
</feature>
<feature type="transmembrane region" description="Helical" evidence="2">
    <location>
        <begin position="559"/>
        <end position="579"/>
    </location>
</feature>
<feature type="region of interest" description="Disordered" evidence="3">
    <location>
        <begin position="592"/>
        <end position="614"/>
    </location>
</feature>
<feature type="compositionally biased region" description="Acidic residues" evidence="3">
    <location>
        <begin position="593"/>
        <end position="606"/>
    </location>
</feature>
<feature type="modified residue" description="Phosphothreonine" evidence="1">
    <location>
        <position position="111"/>
    </location>
</feature>
<organism>
    <name type="scientific">Arabidopsis thaliana</name>
    <name type="common">Mouse-ear cress</name>
    <dbReference type="NCBI Taxonomy" id="3702"/>
    <lineage>
        <taxon>Eukaryota</taxon>
        <taxon>Viridiplantae</taxon>
        <taxon>Streptophyta</taxon>
        <taxon>Embryophyta</taxon>
        <taxon>Tracheophyta</taxon>
        <taxon>Spermatophyta</taxon>
        <taxon>Magnoliopsida</taxon>
        <taxon>eudicotyledons</taxon>
        <taxon>Gunneridae</taxon>
        <taxon>Pentapetalae</taxon>
        <taxon>rosids</taxon>
        <taxon>malvids</taxon>
        <taxon>Brassicales</taxon>
        <taxon>Brassicaceae</taxon>
        <taxon>Camelineae</taxon>
        <taxon>Arabidopsis</taxon>
    </lineage>
</organism>
<comment type="function">
    <text evidence="5">Low-affinity proton-dependent bidirectional nitrate transporter. Involved in nitrate loading into xylem and not in nitrate uptake. Not involved in histidine or dipeptides transport.</text>
</comment>
<comment type="biophysicochemical properties">
    <kinetics>
        <KM evidence="5">6 mM for nitrate</KM>
    </kinetics>
</comment>
<comment type="subcellular location">
    <subcellularLocation>
        <location evidence="5">Cell membrane</location>
        <topology evidence="5">Multi-pass membrane protein</topology>
    </subcellularLocation>
</comment>
<comment type="tissue specificity">
    <text evidence="4 5 6">High expression in roots. Barely detected in shoots. Expressed in root pericycle cells close to the xylem.</text>
</comment>
<comment type="induction">
    <text evidence="5 6">Up-regulated slowly by nitrate. Down-regulated by cadmium and high pH. Circadian-regulation. Expression increase during the dark phase and decrease during the light phase.</text>
</comment>
<comment type="disruption phenotype">
    <text evidence="5 6">No visible phenotype when grown under normal conditions. Lower nitrate concentration in xylem sap. Decreased long-distance root-to-shoot transport of nitrate but not of sulfate or phosphate.</text>
</comment>
<comment type="similarity">
    <text evidence="7">Belongs to the major facilitator superfamily. Proton-dependent oligopeptide transporter (POT/PTR) (TC 2.A.17) family.</text>
</comment>
<comment type="sequence caution" evidence="7">
    <conflict type="erroneous gene model prediction">
        <sequence resource="EMBL-CDS" id="AAF81343"/>
    </conflict>
</comment>